<feature type="chain" id="PRO_0000062549" description="Ribulose bisphosphate carboxylase large chain">
    <location>
        <begin position="1"/>
        <end position="488"/>
    </location>
</feature>
<feature type="active site" description="Proton acceptor" evidence="1">
    <location>
        <position position="179"/>
    </location>
</feature>
<feature type="active site" description="Proton acceptor" evidence="1">
    <location>
        <position position="297"/>
    </location>
</feature>
<feature type="binding site" description="in homodimeric partner" evidence="1">
    <location>
        <position position="127"/>
    </location>
    <ligand>
        <name>substrate</name>
    </ligand>
</feature>
<feature type="binding site" evidence="1">
    <location>
        <position position="177"/>
    </location>
    <ligand>
        <name>substrate</name>
    </ligand>
</feature>
<feature type="binding site" evidence="1">
    <location>
        <position position="181"/>
    </location>
    <ligand>
        <name>substrate</name>
    </ligand>
</feature>
<feature type="binding site" description="via carbamate group" evidence="1">
    <location>
        <position position="205"/>
    </location>
    <ligand>
        <name>Mg(2+)</name>
        <dbReference type="ChEBI" id="CHEBI:18420"/>
    </ligand>
</feature>
<feature type="binding site" evidence="1">
    <location>
        <position position="207"/>
    </location>
    <ligand>
        <name>Mg(2+)</name>
        <dbReference type="ChEBI" id="CHEBI:18420"/>
    </ligand>
</feature>
<feature type="binding site" evidence="1">
    <location>
        <position position="208"/>
    </location>
    <ligand>
        <name>Mg(2+)</name>
        <dbReference type="ChEBI" id="CHEBI:18420"/>
    </ligand>
</feature>
<feature type="binding site" evidence="1">
    <location>
        <position position="298"/>
    </location>
    <ligand>
        <name>substrate</name>
    </ligand>
</feature>
<feature type="binding site" evidence="1">
    <location>
        <position position="330"/>
    </location>
    <ligand>
        <name>substrate</name>
    </ligand>
</feature>
<feature type="binding site" evidence="1">
    <location>
        <position position="382"/>
    </location>
    <ligand>
        <name>substrate</name>
    </ligand>
</feature>
<feature type="site" description="Transition state stabilizer" evidence="1">
    <location>
        <position position="337"/>
    </location>
</feature>
<feature type="modified residue" description="N6-carboxylysine" evidence="1">
    <location>
        <position position="205"/>
    </location>
</feature>
<sequence>MSNNVYERNRIKNDRYESGVIPYAKMGYWDANYSVKDTDLLALFRLTPQPGVDPVEAAAAVAGESSTATWTVVWTDLLTACDVYRAKAYRVDPVPSAADQYFAYIAYECDLFEEGSLANMTASIIGNVFGFKAVAALRLEDMRIPYAYLKTFQGPATGIIVERERLDTFGRPLLGATVKPKLGLSGKNYGRVVYEGLRGGIDFLKDDENINSQPFMRWRERFLYCMEGINRASAASGEVKGSYLNVTAATMEEMYERADYAKAVGSVIVMIDLVIGYTAIQSMAIWARKNDMILHLHRAGNSTYARQKNHGINFRVICKWMRMAGVDHIHAGTVVGKLEGDPLMVKGFYDVLRETELSINLPQGIFFEMDWASLRKCCPVASGGIHCGQMHQLVYYLGDDVVLQFGGGTIGHPDGIQAGATANRVALEAMILARNEGRDYVSEGPEILRDIAKLCGPLKTALDLWKGITFNYTSTDTADFVETATSNP</sequence>
<evidence type="ECO:0000255" key="1">
    <source>
        <dbReference type="HAMAP-Rule" id="MF_01338"/>
    </source>
</evidence>
<keyword id="KW-0113">Calvin cycle</keyword>
<keyword id="KW-0120">Carbon dioxide fixation</keyword>
<keyword id="KW-0150">Chloroplast</keyword>
<keyword id="KW-0456">Lyase</keyword>
<keyword id="KW-0460">Magnesium</keyword>
<keyword id="KW-0479">Metal-binding</keyword>
<keyword id="KW-0503">Monooxygenase</keyword>
<keyword id="KW-0560">Oxidoreductase</keyword>
<keyword id="KW-0601">Photorespiration</keyword>
<keyword id="KW-0602">Photosynthesis</keyword>
<keyword id="KW-0934">Plastid</keyword>
<organism>
    <name type="scientific">Olisthodiscus luteus</name>
    <name type="common">Marine phytoflagellate</name>
    <dbReference type="NCBI Taxonomy" id="83000"/>
    <lineage>
        <taxon>Eukaryota</taxon>
        <taxon>Sar</taxon>
        <taxon>Stramenopiles</taxon>
        <taxon>Ochrophyta</taxon>
        <taxon>Olisthodiscophyceae</taxon>
        <taxon>Olisthodiscaceae</taxon>
        <taxon>Olisthodiscus</taxon>
    </lineage>
</organism>
<name>RBL_OLILU</name>
<comment type="function">
    <text evidence="1">RuBisCO catalyzes two reactions: the carboxylation of D-ribulose 1,5-bisphosphate, the primary event in carbon dioxide fixation, as well as the oxidative fragmentation of the pentose substrate in the photorespiration process. Both reactions occur simultaneously and in competition at the same active site.</text>
</comment>
<comment type="catalytic activity">
    <reaction evidence="1">
        <text>2 (2R)-3-phosphoglycerate + 2 H(+) = D-ribulose 1,5-bisphosphate + CO2 + H2O</text>
        <dbReference type="Rhea" id="RHEA:23124"/>
        <dbReference type="ChEBI" id="CHEBI:15377"/>
        <dbReference type="ChEBI" id="CHEBI:15378"/>
        <dbReference type="ChEBI" id="CHEBI:16526"/>
        <dbReference type="ChEBI" id="CHEBI:57870"/>
        <dbReference type="ChEBI" id="CHEBI:58272"/>
        <dbReference type="EC" id="4.1.1.39"/>
    </reaction>
</comment>
<comment type="catalytic activity">
    <reaction evidence="1">
        <text>D-ribulose 1,5-bisphosphate + O2 = 2-phosphoglycolate + (2R)-3-phosphoglycerate + 2 H(+)</text>
        <dbReference type="Rhea" id="RHEA:36631"/>
        <dbReference type="ChEBI" id="CHEBI:15378"/>
        <dbReference type="ChEBI" id="CHEBI:15379"/>
        <dbReference type="ChEBI" id="CHEBI:57870"/>
        <dbReference type="ChEBI" id="CHEBI:58033"/>
        <dbReference type="ChEBI" id="CHEBI:58272"/>
    </reaction>
</comment>
<comment type="cofactor">
    <cofactor evidence="1">
        <name>Mg(2+)</name>
        <dbReference type="ChEBI" id="CHEBI:18420"/>
    </cofactor>
    <text evidence="1">Binds 1 Mg(2+) ion per subunit.</text>
</comment>
<comment type="subunit">
    <text evidence="1">Heterohexadecamer of 8 large chains and 8 small chains.</text>
</comment>
<comment type="subcellular location">
    <subcellularLocation>
        <location>Plastid</location>
        <location>Chloroplast</location>
    </subcellularLocation>
</comment>
<comment type="miscellaneous">
    <text evidence="1">The basic functional RuBisCO is composed of a large chain homodimer in a 'head-to-tail' conformation. In form I RuBisCO this homodimer is arranged in a barrel-like tetramer with the small subunits forming a tetrameric 'cap' on each end of the 'barrel'.</text>
</comment>
<comment type="similarity">
    <text evidence="1">Belongs to the RuBisCO large chain family. Type I subfamily.</text>
</comment>
<proteinExistence type="inferred from homology"/>
<reference key="1">
    <citation type="journal article" date="1992" name="Plant Mol. Biol.">
        <title>A description of the Rubisco large subunit gene and its transcript in Olisthodiscus luteus.</title>
        <authorList>
            <person name="Hardison L.K."/>
            <person name="Boczar B.A."/>
            <person name="Reynolds A.E."/>
            <person name="Cattolico R.A."/>
        </authorList>
    </citation>
    <scope>NUCLEOTIDE SEQUENCE [GENOMIC DNA]</scope>
</reference>
<reference key="2">
    <citation type="journal article" date="1989" name="Proc. Natl. Acad. Sci. U.S.A.">
        <title>Gene for the ribulose-1,5-bisphosphate carboxylase small subunit protein of the marine chromophyte Olisthodiscus luteus is similar to that of a chemoautotrophic bacterium.</title>
        <authorList>
            <person name="Boczar B.A."/>
            <person name="Delaney T.P."/>
            <person name="Cattolico R.A."/>
        </authorList>
    </citation>
    <scope>NUCLEOTIDE SEQUENCE [GENOMIC DNA] OF 470-488</scope>
    <source>
        <strain>Carter</strain>
    </source>
</reference>
<protein>
    <recommendedName>
        <fullName evidence="1">Ribulose bisphosphate carboxylase large chain</fullName>
        <shortName evidence="1">RuBisCO large subunit</shortName>
        <ecNumber evidence="1">4.1.1.39</ecNumber>
    </recommendedName>
</protein>
<geneLocation type="chloroplast"/>
<accession>P14959</accession>
<dbReference type="EC" id="4.1.1.39" evidence="1"/>
<dbReference type="EMBL" id="X61918">
    <property type="protein sequence ID" value="CAA43920.1"/>
    <property type="molecule type" value="Genomic_DNA"/>
</dbReference>
<dbReference type="EMBL" id="M24288">
    <property type="protein sequence ID" value="AAA84531.1"/>
    <property type="molecule type" value="Genomic_DNA"/>
</dbReference>
<dbReference type="PIR" id="S20506">
    <property type="entry name" value="S20506"/>
</dbReference>
<dbReference type="SMR" id="P14959"/>
<dbReference type="GO" id="GO:0009507">
    <property type="term" value="C:chloroplast"/>
    <property type="evidence" value="ECO:0007669"/>
    <property type="project" value="UniProtKB-SubCell"/>
</dbReference>
<dbReference type="GO" id="GO:0000287">
    <property type="term" value="F:magnesium ion binding"/>
    <property type="evidence" value="ECO:0007669"/>
    <property type="project" value="UniProtKB-UniRule"/>
</dbReference>
<dbReference type="GO" id="GO:0004497">
    <property type="term" value="F:monooxygenase activity"/>
    <property type="evidence" value="ECO:0007669"/>
    <property type="project" value="UniProtKB-KW"/>
</dbReference>
<dbReference type="GO" id="GO:0016984">
    <property type="term" value="F:ribulose-bisphosphate carboxylase activity"/>
    <property type="evidence" value="ECO:0007669"/>
    <property type="project" value="UniProtKB-UniRule"/>
</dbReference>
<dbReference type="GO" id="GO:0019253">
    <property type="term" value="P:reductive pentose-phosphate cycle"/>
    <property type="evidence" value="ECO:0007669"/>
    <property type="project" value="UniProtKB-UniRule"/>
</dbReference>
<dbReference type="CDD" id="cd08212">
    <property type="entry name" value="RuBisCO_large_I"/>
    <property type="match status" value="1"/>
</dbReference>
<dbReference type="Gene3D" id="3.20.20.110">
    <property type="entry name" value="Ribulose bisphosphate carboxylase, large subunit, C-terminal domain"/>
    <property type="match status" value="1"/>
</dbReference>
<dbReference type="Gene3D" id="3.30.70.150">
    <property type="entry name" value="RuBisCO large subunit, N-terminal domain"/>
    <property type="match status" value="1"/>
</dbReference>
<dbReference type="HAMAP" id="MF_01338">
    <property type="entry name" value="RuBisCO_L_type1"/>
    <property type="match status" value="1"/>
</dbReference>
<dbReference type="InterPro" id="IPR033966">
    <property type="entry name" value="RuBisCO"/>
</dbReference>
<dbReference type="InterPro" id="IPR020878">
    <property type="entry name" value="RuBisCo_large_chain_AS"/>
</dbReference>
<dbReference type="InterPro" id="IPR000685">
    <property type="entry name" value="RuBisCO_lsu_C"/>
</dbReference>
<dbReference type="InterPro" id="IPR036376">
    <property type="entry name" value="RuBisCO_lsu_C_sf"/>
</dbReference>
<dbReference type="InterPro" id="IPR017443">
    <property type="entry name" value="RuBisCO_lsu_fd_N"/>
</dbReference>
<dbReference type="InterPro" id="IPR036422">
    <property type="entry name" value="RuBisCO_lsu_N_sf"/>
</dbReference>
<dbReference type="InterPro" id="IPR020888">
    <property type="entry name" value="RuBisCO_lsuI"/>
</dbReference>
<dbReference type="NCBIfam" id="NF003252">
    <property type="entry name" value="PRK04208.1"/>
    <property type="match status" value="1"/>
</dbReference>
<dbReference type="PANTHER" id="PTHR42704">
    <property type="entry name" value="RIBULOSE BISPHOSPHATE CARBOXYLASE"/>
    <property type="match status" value="1"/>
</dbReference>
<dbReference type="PANTHER" id="PTHR42704:SF17">
    <property type="entry name" value="RIBULOSE BISPHOSPHATE CARBOXYLASE LARGE CHAIN"/>
    <property type="match status" value="1"/>
</dbReference>
<dbReference type="Pfam" id="PF00016">
    <property type="entry name" value="RuBisCO_large"/>
    <property type="match status" value="1"/>
</dbReference>
<dbReference type="Pfam" id="PF02788">
    <property type="entry name" value="RuBisCO_large_N"/>
    <property type="match status" value="1"/>
</dbReference>
<dbReference type="SFLD" id="SFLDG01052">
    <property type="entry name" value="RuBisCO"/>
    <property type="match status" value="1"/>
</dbReference>
<dbReference type="SFLD" id="SFLDS00014">
    <property type="entry name" value="RuBisCO"/>
    <property type="match status" value="1"/>
</dbReference>
<dbReference type="SFLD" id="SFLDG00301">
    <property type="entry name" value="RuBisCO-like_proteins"/>
    <property type="match status" value="1"/>
</dbReference>
<dbReference type="SUPFAM" id="SSF51649">
    <property type="entry name" value="RuBisCo, C-terminal domain"/>
    <property type="match status" value="1"/>
</dbReference>
<dbReference type="SUPFAM" id="SSF54966">
    <property type="entry name" value="RuBisCO, large subunit, small (N-terminal) domain"/>
    <property type="match status" value="1"/>
</dbReference>
<dbReference type="PROSITE" id="PS00157">
    <property type="entry name" value="RUBISCO_LARGE"/>
    <property type="match status" value="1"/>
</dbReference>
<gene>
    <name evidence="1" type="primary">rbcL</name>
</gene>